<dbReference type="EMBL" id="AB088369">
    <property type="protein sequence ID" value="BAC05682.1"/>
    <property type="molecule type" value="mRNA"/>
</dbReference>
<dbReference type="EMBL" id="AK022874">
    <property type="protein sequence ID" value="BAB14286.1"/>
    <property type="molecule type" value="mRNA"/>
</dbReference>
<dbReference type="EMBL" id="AK026435">
    <property type="protein sequence ID" value="BAB15483.1"/>
    <property type="status" value="ALT_INIT"/>
    <property type="molecule type" value="mRNA"/>
</dbReference>
<dbReference type="EMBL" id="AK297557">
    <property type="protein sequence ID" value="BAG59950.1"/>
    <property type="molecule type" value="mRNA"/>
</dbReference>
<dbReference type="EMBL" id="AC106804">
    <property type="status" value="NOT_ANNOTATED_CDS"/>
    <property type="molecule type" value="Genomic_DNA"/>
</dbReference>
<dbReference type="EMBL" id="BC000796">
    <property type="protein sequence ID" value="AAH00796.1"/>
    <property type="molecule type" value="mRNA"/>
</dbReference>
<dbReference type="EMBL" id="BC006306">
    <property type="protein sequence ID" value="AAH06306.2"/>
    <property type="molecule type" value="mRNA"/>
</dbReference>
<dbReference type="EMBL" id="BC013347">
    <property type="protein sequence ID" value="AAH13347.2"/>
    <property type="molecule type" value="mRNA"/>
</dbReference>
<dbReference type="EMBL" id="BC072438">
    <property type="protein sequence ID" value="AAH72438.1"/>
    <property type="molecule type" value="mRNA"/>
</dbReference>
<dbReference type="EMBL" id="AL050101">
    <property type="protein sequence ID" value="CAB43272.1"/>
    <property type="molecule type" value="mRNA"/>
</dbReference>
<dbReference type="RefSeq" id="NP_001182068.1">
    <property type="nucleotide sequence ID" value="NM_001195139.1"/>
</dbReference>
<dbReference type="RefSeq" id="NP_056201.2">
    <property type="nucleotide sequence ID" value="NM_015386.2"/>
</dbReference>
<dbReference type="PDB" id="3HR0">
    <property type="method" value="X-ray"/>
    <property type="resolution" value="1.90 A"/>
    <property type="chains" value="A/B=525-785"/>
</dbReference>
<dbReference type="PDBsum" id="3HR0"/>
<dbReference type="SMR" id="Q9H9E3"/>
<dbReference type="BioGRID" id="117365">
    <property type="interactions" value="121"/>
</dbReference>
<dbReference type="ComplexPortal" id="CPX-6199">
    <property type="entry name" value="COG tethering complex"/>
</dbReference>
<dbReference type="CORUM" id="Q9H9E3"/>
<dbReference type="DIP" id="DIP-32635N"/>
<dbReference type="FunCoup" id="Q9H9E3">
    <property type="interactions" value="2687"/>
</dbReference>
<dbReference type="IntAct" id="Q9H9E3">
    <property type="interactions" value="81"/>
</dbReference>
<dbReference type="MINT" id="Q9H9E3"/>
<dbReference type="STRING" id="9606.ENSP00000315775"/>
<dbReference type="ChEMBL" id="CHEMBL4105733"/>
<dbReference type="GlyGen" id="Q9H9E3">
    <property type="glycosylation" value="1 site, 1 N-linked glycan (1 site)"/>
</dbReference>
<dbReference type="iPTMnet" id="Q9H9E3"/>
<dbReference type="PhosphoSitePlus" id="Q9H9E3"/>
<dbReference type="SwissPalm" id="Q9H9E3"/>
<dbReference type="BioMuta" id="COG4"/>
<dbReference type="DMDM" id="311033464"/>
<dbReference type="jPOST" id="Q9H9E3"/>
<dbReference type="MassIVE" id="Q9H9E3"/>
<dbReference type="PaxDb" id="9606-ENSP00000315775"/>
<dbReference type="PeptideAtlas" id="Q9H9E3"/>
<dbReference type="ProteomicsDB" id="81316">
    <molecule id="Q9H9E3-1"/>
</dbReference>
<dbReference type="ProteomicsDB" id="81317">
    <molecule id="Q9H9E3-2"/>
</dbReference>
<dbReference type="ProteomicsDB" id="81318">
    <molecule id="Q9H9E3-3"/>
</dbReference>
<dbReference type="Pumba" id="Q9H9E3"/>
<dbReference type="DNASU" id="25839"/>
<dbReference type="Ensembl" id="ENST00000482252.5">
    <molecule id="Q9H9E3-2"/>
    <property type="protein sequence ID" value="ENSP00000432802.1"/>
    <property type="gene ID" value="ENSG00000103051.21"/>
</dbReference>
<dbReference type="GeneID" id="25839"/>
<dbReference type="KEGG" id="hsa:25839"/>
<dbReference type="UCSC" id="uc059wqe.1">
    <molecule id="Q9H9E3-1"/>
    <property type="organism name" value="human"/>
</dbReference>
<dbReference type="AGR" id="HGNC:18620"/>
<dbReference type="CTD" id="25839"/>
<dbReference type="DisGeNET" id="25839"/>
<dbReference type="GeneCards" id="COG4"/>
<dbReference type="GeneReviews" id="COG4"/>
<dbReference type="HGNC" id="HGNC:18620">
    <property type="gene designation" value="COG4"/>
</dbReference>
<dbReference type="MalaCards" id="COG4"/>
<dbReference type="MIM" id="606976">
    <property type="type" value="gene"/>
</dbReference>
<dbReference type="MIM" id="613489">
    <property type="type" value="phenotype"/>
</dbReference>
<dbReference type="MIM" id="618150">
    <property type="type" value="phenotype"/>
</dbReference>
<dbReference type="neXtProt" id="NX_Q9H9E3"/>
<dbReference type="OpenTargets" id="ENSG00000103051"/>
<dbReference type="Orphanet" id="263501">
    <property type="disease" value="COG4-CDG"/>
</dbReference>
<dbReference type="Orphanet" id="85172">
    <property type="disease" value="Microcephalic osteodysplastic dysplasia, Saul-Wilson type"/>
</dbReference>
<dbReference type="PharmGKB" id="PA38603"/>
<dbReference type="VEuPathDB" id="HostDB:ENSG00000103051"/>
<dbReference type="eggNOG" id="KOG0412">
    <property type="taxonomic scope" value="Eukaryota"/>
</dbReference>
<dbReference type="GeneTree" id="ENSGT00940000154065"/>
<dbReference type="HOGENOM" id="CLU_014853_0_0_1"/>
<dbReference type="InParanoid" id="Q9H9E3"/>
<dbReference type="OrthoDB" id="47059at2759"/>
<dbReference type="PAN-GO" id="Q9H9E3">
    <property type="GO annotations" value="4 GO annotations based on evolutionary models"/>
</dbReference>
<dbReference type="PhylomeDB" id="Q9H9E3"/>
<dbReference type="PathwayCommons" id="Q9H9E3"/>
<dbReference type="Reactome" id="R-HSA-6807878">
    <property type="pathway name" value="COPI-mediated anterograde transport"/>
</dbReference>
<dbReference type="Reactome" id="R-HSA-6811438">
    <property type="pathway name" value="Intra-Golgi traffic"/>
</dbReference>
<dbReference type="Reactome" id="R-HSA-6811440">
    <property type="pathway name" value="Retrograde transport at the Trans-Golgi-Network"/>
</dbReference>
<dbReference type="SignaLink" id="Q9H9E3"/>
<dbReference type="BioGRID-ORCS" id="25839">
    <property type="hits" value="418 hits in 1169 CRISPR screens"/>
</dbReference>
<dbReference type="ChiTaRS" id="COG4">
    <property type="organism name" value="human"/>
</dbReference>
<dbReference type="EvolutionaryTrace" id="Q9H9E3"/>
<dbReference type="GeneWiki" id="COG4"/>
<dbReference type="GenomeRNAi" id="25839"/>
<dbReference type="Pharos" id="Q9H9E3">
    <property type="development level" value="Tbio"/>
</dbReference>
<dbReference type="PRO" id="PR:Q9H9E3"/>
<dbReference type="Proteomes" id="UP000005640">
    <property type="component" value="Chromosome 16"/>
</dbReference>
<dbReference type="RNAct" id="Q9H9E3">
    <property type="molecule type" value="protein"/>
</dbReference>
<dbReference type="Bgee" id="ENSG00000103051">
    <property type="expression patterns" value="Expressed in lower esophagus mucosa and 191 other cell types or tissues"/>
</dbReference>
<dbReference type="ExpressionAtlas" id="Q9H9E3">
    <property type="expression patterns" value="baseline and differential"/>
</dbReference>
<dbReference type="GO" id="GO:0005829">
    <property type="term" value="C:cytosol"/>
    <property type="evidence" value="ECO:0007669"/>
    <property type="project" value="UniProtKB-SubCell"/>
</dbReference>
<dbReference type="GO" id="GO:0000139">
    <property type="term" value="C:Golgi membrane"/>
    <property type="evidence" value="ECO:0000304"/>
    <property type="project" value="Reactome"/>
</dbReference>
<dbReference type="GO" id="GO:0017119">
    <property type="term" value="C:Golgi transport complex"/>
    <property type="evidence" value="ECO:0000314"/>
    <property type="project" value="UniProtKB"/>
</dbReference>
<dbReference type="GO" id="GO:0032588">
    <property type="term" value="C:trans-Golgi network membrane"/>
    <property type="evidence" value="ECO:0000304"/>
    <property type="project" value="Reactome"/>
</dbReference>
<dbReference type="GO" id="GO:0042802">
    <property type="term" value="F:identical protein binding"/>
    <property type="evidence" value="ECO:0000353"/>
    <property type="project" value="IntAct"/>
</dbReference>
<dbReference type="GO" id="GO:0070085">
    <property type="term" value="P:glycosylation"/>
    <property type="evidence" value="ECO:0000315"/>
    <property type="project" value="ComplexPortal"/>
</dbReference>
<dbReference type="GO" id="GO:0007030">
    <property type="term" value="P:Golgi organization"/>
    <property type="evidence" value="ECO:0000315"/>
    <property type="project" value="UniProtKB"/>
</dbReference>
<dbReference type="GO" id="GO:0015031">
    <property type="term" value="P:protein transport"/>
    <property type="evidence" value="ECO:0007669"/>
    <property type="project" value="UniProtKB-KW"/>
</dbReference>
<dbReference type="GO" id="GO:0000301">
    <property type="term" value="P:retrograde transport, vesicle recycling within Golgi"/>
    <property type="evidence" value="ECO:0000315"/>
    <property type="project" value="ComplexPortal"/>
</dbReference>
<dbReference type="GO" id="GO:0006890">
    <property type="term" value="P:retrograde vesicle-mediated transport, Golgi to endoplasmic reticulum"/>
    <property type="evidence" value="ECO:0000315"/>
    <property type="project" value="UniProtKB"/>
</dbReference>
<dbReference type="FunFam" id="1.10.287.1060:FF:000002">
    <property type="entry name" value="Conserved oligomeric Golgi complex subunit 4"/>
    <property type="match status" value="1"/>
</dbReference>
<dbReference type="FunFam" id="1.20.58.1970:FF:000001">
    <property type="entry name" value="Conserved oligomeric Golgi complex subunit 4"/>
    <property type="match status" value="1"/>
</dbReference>
<dbReference type="Gene3D" id="1.20.58.1970">
    <property type="match status" value="1"/>
</dbReference>
<dbReference type="Gene3D" id="1.10.287.1060">
    <property type="entry name" value="ESAT-6-like"/>
    <property type="match status" value="1"/>
</dbReference>
<dbReference type="InterPro" id="IPR048682">
    <property type="entry name" value="COG4"/>
</dbReference>
<dbReference type="InterPro" id="IPR048684">
    <property type="entry name" value="COG4_C"/>
</dbReference>
<dbReference type="InterPro" id="IPR013167">
    <property type="entry name" value="COG4_M"/>
</dbReference>
<dbReference type="InterPro" id="IPR048680">
    <property type="entry name" value="COG4_N"/>
</dbReference>
<dbReference type="PANTHER" id="PTHR24016">
    <property type="entry name" value="CONSERVED OLIGOMERIC GOLGI COMPLEX SUBUNIT 4"/>
    <property type="match status" value="1"/>
</dbReference>
<dbReference type="PANTHER" id="PTHR24016:SF0">
    <property type="entry name" value="CONSERVED OLIGOMERIC GOLGI COMPLEX SUBUNIT 4"/>
    <property type="match status" value="1"/>
</dbReference>
<dbReference type="Pfam" id="PF20662">
    <property type="entry name" value="COG4_C"/>
    <property type="match status" value="1"/>
</dbReference>
<dbReference type="Pfam" id="PF08318">
    <property type="entry name" value="COG4_m"/>
    <property type="match status" value="1"/>
</dbReference>
<dbReference type="Pfam" id="PF20663">
    <property type="entry name" value="COG4_N"/>
    <property type="match status" value="1"/>
</dbReference>
<dbReference type="SMART" id="SM00762">
    <property type="entry name" value="Cog4"/>
    <property type="match status" value="1"/>
</dbReference>
<keyword id="KW-0002">3D-structure</keyword>
<keyword id="KW-0007">Acetylation</keyword>
<keyword id="KW-0025">Alternative splicing</keyword>
<keyword id="KW-0900">Congenital disorder of glycosylation</keyword>
<keyword id="KW-0963">Cytoplasm</keyword>
<keyword id="KW-0225">Disease variant</keyword>
<keyword id="KW-0242">Dwarfism</keyword>
<keyword id="KW-0333">Golgi apparatus</keyword>
<keyword id="KW-0472">Membrane</keyword>
<keyword id="KW-0597">Phosphoprotein</keyword>
<keyword id="KW-0653">Protein transport</keyword>
<keyword id="KW-1267">Proteomics identification</keyword>
<keyword id="KW-1185">Reference proteome</keyword>
<keyword id="KW-0813">Transport</keyword>
<comment type="function">
    <text evidence="5 7">Required for normal Golgi function (PubMed:19536132, PubMed:30290151). Plays a role in SNARE-pin assembly and Golgi-to-ER retrograde transport via its interaction with SCFD1 (PubMed:19536132).</text>
</comment>
<comment type="subunit">
    <text evidence="5 6">Monomer. Component of the conserved oligomeric Golgi (COG) complex which is composed of eight different subunits and is required for normal Golgi morphology and localization (PubMed:19651599). Mediates interaction of SCFD1 with the COG complex (PubMed:19536132). Interacts with STX5 (PubMed:19536132).</text>
</comment>
<comment type="interaction">
    <interactant intactId="EBI-368382">
        <id>Q9H9E3</id>
    </interactant>
    <interactant intactId="EBI-17183751">
        <id>X5D778</id>
        <label>ANKRD11</label>
    </interactant>
    <organismsDiffer>false</organismsDiffer>
    <experiments>3</experiments>
</comment>
<comment type="interaction">
    <interactant intactId="EBI-368382">
        <id>Q9H9E3</id>
    </interactant>
    <interactant intactId="EBI-745073">
        <id>Q9BXY8</id>
        <label>BEX2</label>
    </interactant>
    <organismsDiffer>false</organismsDiffer>
    <experiments>3</experiments>
</comment>
<comment type="interaction">
    <interactant intactId="EBI-368382">
        <id>Q9H9E3</id>
    </interactant>
    <interactant intactId="EBI-368371">
        <id>Q8WTW3</id>
        <label>COG1</label>
    </interactant>
    <organismsDiffer>false</organismsDiffer>
    <experiments>3</experiments>
</comment>
<comment type="interaction">
    <interactant intactId="EBI-368382">
        <id>Q9H9E3</id>
    </interactant>
    <interactant intactId="EBI-389449">
        <id>Q14746</id>
        <label>COG2</label>
    </interactant>
    <organismsDiffer>false</organismsDiffer>
    <experiments>5</experiments>
</comment>
<comment type="interaction">
    <interactant intactId="EBI-368382">
        <id>Q9H9E3</id>
    </interactant>
    <interactant intactId="EBI-389502">
        <id>Q9UP83</id>
        <label>COG5</label>
    </interactant>
    <organismsDiffer>false</organismsDiffer>
    <experiments>4</experiments>
</comment>
<comment type="interaction">
    <interactant intactId="EBI-368382">
        <id>Q9H9E3</id>
    </interactant>
    <interactant intactId="EBI-389534">
        <id>P83436</id>
        <label>COG7</label>
    </interactant>
    <organismsDiffer>false</organismsDiffer>
    <experiments>6</experiments>
</comment>
<comment type="interaction">
    <interactant intactId="EBI-368382">
        <id>Q9H9E3</id>
    </interactant>
    <interactant intactId="EBI-11962928">
        <id>Q9UI47-2</id>
        <label>CTNNA3</label>
    </interactant>
    <organismsDiffer>false</organismsDiffer>
    <experiments>3</experiments>
</comment>
<comment type="interaction">
    <interactant intactId="EBI-368382">
        <id>Q9H9E3</id>
    </interactant>
    <interactant intactId="EBI-1752811">
        <id>Q9BQ89</id>
        <label>FAM110A</label>
    </interactant>
    <organismsDiffer>false</organismsDiffer>
    <experiments>3</experiments>
</comment>
<comment type="interaction">
    <interactant intactId="EBI-368382">
        <id>Q9H9E3</id>
    </interactant>
    <interactant intactId="EBI-725361">
        <id>Q9Y285</id>
        <label>FARSA</label>
    </interactant>
    <organismsDiffer>false</organismsDiffer>
    <experiments>3</experiments>
</comment>
<comment type="interaction">
    <interactant intactId="EBI-368382">
        <id>Q9H9E3</id>
    </interactant>
    <interactant intactId="EBI-744120">
        <id>Q969V5</id>
        <label>MUL1</label>
    </interactant>
    <organismsDiffer>false</organismsDiffer>
    <experiments>2</experiments>
</comment>
<comment type="interaction">
    <interactant intactId="EBI-368382">
        <id>Q9H9E3</id>
    </interactant>
    <interactant intactId="EBI-359352">
        <id>P25786</id>
        <label>PSMA1</label>
    </interactant>
    <organismsDiffer>false</organismsDiffer>
    <experiments>3</experiments>
</comment>
<comment type="interaction">
    <interactant intactId="EBI-368382">
        <id>Q9H9E3</id>
    </interactant>
    <interactant intactId="EBI-722569">
        <id>Q8WVM8</id>
        <label>SCFD1</label>
    </interactant>
    <organismsDiffer>false</organismsDiffer>
    <experiments>10</experiments>
</comment>
<comment type="interaction">
    <interactant intactId="EBI-368382">
        <id>Q9H9E3</id>
    </interactant>
    <interactant intactId="EBI-741237">
        <id>O60504</id>
        <label>SORBS3</label>
    </interactant>
    <organismsDiffer>false</organismsDiffer>
    <experiments>3</experiments>
</comment>
<comment type="interaction">
    <interactant intactId="EBI-368382">
        <id>Q9H9E3</id>
    </interactant>
    <interactant intactId="EBI-714206">
        <id>Q13190</id>
        <label>STX5</label>
    </interactant>
    <organismsDiffer>false</organismsDiffer>
    <experiments>2</experiments>
</comment>
<comment type="interaction">
    <interactant intactId="EBI-368382">
        <id>Q9H9E3</id>
    </interactant>
    <interactant intactId="EBI-707554">
        <id>O14530</id>
        <label>TXNDC9</label>
    </interactant>
    <organismsDiffer>false</organismsDiffer>
    <experiments>5</experiments>
</comment>
<comment type="interaction">
    <interactant intactId="EBI-15796331">
        <id>Q9H9E3-1</id>
    </interactant>
    <interactant intactId="EBI-15796331">
        <id>Q9H9E3-1</id>
        <label>COG4</label>
    </interactant>
    <organismsDiffer>false</organismsDiffer>
    <experiments>2</experiments>
</comment>
<comment type="subcellular location">
    <subcellularLocation>
        <location evidence="7">Cytoplasm</location>
        <location evidence="7">Cytosol</location>
    </subcellularLocation>
    <subcellularLocation>
        <location evidence="12">Golgi apparatus membrane</location>
        <topology evidence="12">Peripheral membrane protein</topology>
        <orientation evidence="12">Cytoplasmic side</orientation>
    </subcellularLocation>
    <text evidence="7">Mosty cytosolic, with about 5% membrane-bound.</text>
</comment>
<comment type="alternative products">
    <event type="alternative splicing"/>
    <isoform>
        <id>Q9H9E3-1</id>
        <name>1</name>
        <sequence type="displayed"/>
    </isoform>
    <isoform>
        <id>Q9H9E3-2</id>
        <name>2</name>
        <name>Cog4S</name>
        <sequence type="described" ref="VSP_001127 VSP_001128"/>
    </isoform>
    <isoform>
        <id>Q9H9E3-3</id>
        <name>3</name>
        <sequence type="described" ref="VSP_037551"/>
    </isoform>
</comment>
<comment type="disease" evidence="4 6">
    <disease id="DI-02772">
        <name>Congenital disorder of glycosylation 2J</name>
        <acronym>CDG2J</acronym>
        <description>A multisystem disorder caused by a defect in glycoprotein biosynthesis and characterized by under-glycosylated serum glycoproteins. Congenital disorders of glycosylation result in a wide variety of clinical features, such as defects in the nervous system development, psychomotor retardation, dysmorphic features, hypotonia, coagulation disorders, and immunodeficiency. The broad spectrum of features reflects the critical role of N-glycoproteins during embryonic development, differentiation, and maintenance of cell functions.</description>
        <dbReference type="MIM" id="613489"/>
    </disease>
    <text>The disease is caused by variants affecting the gene represented in this entry.</text>
</comment>
<comment type="disease" evidence="7">
    <disease id="DI-05354">
        <name>Saul-Wilson syndrome</name>
        <acronym>SWILS</acronym>
        <description>A rare skeletal dysplasia with characteristic dysmorphic and radiographic findings, as well as early developmental delay, primarily involving speech, with eventual normal cognition. Clinical findings include marked short stature, prominent forehead with an enlarged anterior fontanel, prominent eyes with cataracts, narrow nasal bridge with a convex nasal ridge, micrognathia, clubfoot, brachydactyly, and short distal phalanges of fingers. Radiographic changes include platyspondyly, irregular end plates of vertebral bodies, and hypoplasia of the odontoid process with cervical instability in the spine, coxa valga, overtubulation, metaphyseal flaring and megaepiphyses in the long bones, while the hands and feet exhibit short phalanges, metacarpals and metatarsals, cone-shaped epiphyses of phalanges, and accessory ossification centers of metacarpals and metatarsals.</description>
        <dbReference type="MIM" id="618150"/>
    </disease>
    <text>The disease is caused by variants affecting the gene represented in this entry.</text>
</comment>
<comment type="miscellaneous">
    <molecule>Isoform 2</molecule>
    <text evidence="11">May be produced at very low levels due to a premature stop codon in the mRNA, leading to nonsense-mediated mRNA decay.</text>
</comment>
<comment type="similarity">
    <text evidence="11">Belongs to the COG4 family.</text>
</comment>
<comment type="sequence caution" evidence="11">
    <conflict type="erroneous initiation">
        <sequence resource="EMBL-CDS" id="BAB15483"/>
    </conflict>
    <text>Truncated N-terminus.</text>
</comment>
<organism>
    <name type="scientific">Homo sapiens</name>
    <name type="common">Human</name>
    <dbReference type="NCBI Taxonomy" id="9606"/>
    <lineage>
        <taxon>Eukaryota</taxon>
        <taxon>Metazoa</taxon>
        <taxon>Chordata</taxon>
        <taxon>Craniata</taxon>
        <taxon>Vertebrata</taxon>
        <taxon>Euteleostomi</taxon>
        <taxon>Mammalia</taxon>
        <taxon>Eutheria</taxon>
        <taxon>Euarchontoglires</taxon>
        <taxon>Primates</taxon>
        <taxon>Haplorrhini</taxon>
        <taxon>Catarrhini</taxon>
        <taxon>Hominidae</taxon>
        <taxon>Homo</taxon>
    </lineage>
</organism>
<reference key="1">
    <citation type="submission" date="2002-07" db="EMBL/GenBank/DDBJ databases">
        <title>Cog4S, a splicing variant of Cog4.</title>
        <authorList>
            <person name="Ariga H."/>
        </authorList>
    </citation>
    <scope>NUCLEOTIDE SEQUENCE [MRNA] (ISOFORM 2)</scope>
    <scope>VARIANT ILE-158</scope>
    <source>
        <tissue>T-cell</tissue>
    </source>
</reference>
<reference key="2">
    <citation type="journal article" date="2004" name="Nat. Genet.">
        <title>Complete sequencing and characterization of 21,243 full-length human cDNAs.</title>
        <authorList>
            <person name="Ota T."/>
            <person name="Suzuki Y."/>
            <person name="Nishikawa T."/>
            <person name="Otsuki T."/>
            <person name="Sugiyama T."/>
            <person name="Irie R."/>
            <person name="Wakamatsu A."/>
            <person name="Hayashi K."/>
            <person name="Sato H."/>
            <person name="Nagai K."/>
            <person name="Kimura K."/>
            <person name="Makita H."/>
            <person name="Sekine M."/>
            <person name="Obayashi M."/>
            <person name="Nishi T."/>
            <person name="Shibahara T."/>
            <person name="Tanaka T."/>
            <person name="Ishii S."/>
            <person name="Yamamoto J."/>
            <person name="Saito K."/>
            <person name="Kawai Y."/>
            <person name="Isono Y."/>
            <person name="Nakamura Y."/>
            <person name="Nagahari K."/>
            <person name="Murakami K."/>
            <person name="Yasuda T."/>
            <person name="Iwayanagi T."/>
            <person name="Wagatsuma M."/>
            <person name="Shiratori A."/>
            <person name="Sudo H."/>
            <person name="Hosoiri T."/>
            <person name="Kaku Y."/>
            <person name="Kodaira H."/>
            <person name="Kondo H."/>
            <person name="Sugawara M."/>
            <person name="Takahashi M."/>
            <person name="Kanda K."/>
            <person name="Yokoi T."/>
            <person name="Furuya T."/>
            <person name="Kikkawa E."/>
            <person name="Omura Y."/>
            <person name="Abe K."/>
            <person name="Kamihara K."/>
            <person name="Katsuta N."/>
            <person name="Sato K."/>
            <person name="Tanikawa M."/>
            <person name="Yamazaki M."/>
            <person name="Ninomiya K."/>
            <person name="Ishibashi T."/>
            <person name="Yamashita H."/>
            <person name="Murakawa K."/>
            <person name="Fujimori K."/>
            <person name="Tanai H."/>
            <person name="Kimata M."/>
            <person name="Watanabe M."/>
            <person name="Hiraoka S."/>
            <person name="Chiba Y."/>
            <person name="Ishida S."/>
            <person name="Ono Y."/>
            <person name="Takiguchi S."/>
            <person name="Watanabe S."/>
            <person name="Yosida M."/>
            <person name="Hotuta T."/>
            <person name="Kusano J."/>
            <person name="Kanehori K."/>
            <person name="Takahashi-Fujii A."/>
            <person name="Hara H."/>
            <person name="Tanase T.-O."/>
            <person name="Nomura Y."/>
            <person name="Togiya S."/>
            <person name="Komai F."/>
            <person name="Hara R."/>
            <person name="Takeuchi K."/>
            <person name="Arita M."/>
            <person name="Imose N."/>
            <person name="Musashino K."/>
            <person name="Yuuki H."/>
            <person name="Oshima A."/>
            <person name="Sasaki N."/>
            <person name="Aotsuka S."/>
            <person name="Yoshikawa Y."/>
            <person name="Matsunawa H."/>
            <person name="Ichihara T."/>
            <person name="Shiohata N."/>
            <person name="Sano S."/>
            <person name="Moriya S."/>
            <person name="Momiyama H."/>
            <person name="Satoh N."/>
            <person name="Takami S."/>
            <person name="Terashima Y."/>
            <person name="Suzuki O."/>
            <person name="Nakagawa S."/>
            <person name="Senoh A."/>
            <person name="Mizoguchi H."/>
            <person name="Goto Y."/>
            <person name="Shimizu F."/>
            <person name="Wakebe H."/>
            <person name="Hishigaki H."/>
            <person name="Watanabe T."/>
            <person name="Sugiyama A."/>
            <person name="Takemoto M."/>
            <person name="Kawakami B."/>
            <person name="Yamazaki M."/>
            <person name="Watanabe K."/>
            <person name="Kumagai A."/>
            <person name="Itakura S."/>
            <person name="Fukuzumi Y."/>
            <person name="Fujimori Y."/>
            <person name="Komiyama M."/>
            <person name="Tashiro H."/>
            <person name="Tanigami A."/>
            <person name="Fujiwara T."/>
            <person name="Ono T."/>
            <person name="Yamada K."/>
            <person name="Fujii Y."/>
            <person name="Ozaki K."/>
            <person name="Hirao M."/>
            <person name="Ohmori Y."/>
            <person name="Kawabata A."/>
            <person name="Hikiji T."/>
            <person name="Kobatake N."/>
            <person name="Inagaki H."/>
            <person name="Ikema Y."/>
            <person name="Okamoto S."/>
            <person name="Okitani R."/>
            <person name="Kawakami T."/>
            <person name="Noguchi S."/>
            <person name="Itoh T."/>
            <person name="Shigeta K."/>
            <person name="Senba T."/>
            <person name="Matsumura K."/>
            <person name="Nakajima Y."/>
            <person name="Mizuno T."/>
            <person name="Morinaga M."/>
            <person name="Sasaki M."/>
            <person name="Togashi T."/>
            <person name="Oyama M."/>
            <person name="Hata H."/>
            <person name="Watanabe M."/>
            <person name="Komatsu T."/>
            <person name="Mizushima-Sugano J."/>
            <person name="Satoh T."/>
            <person name="Shirai Y."/>
            <person name="Takahashi Y."/>
            <person name="Nakagawa K."/>
            <person name="Okumura K."/>
            <person name="Nagase T."/>
            <person name="Nomura N."/>
            <person name="Kikuchi H."/>
            <person name="Masuho Y."/>
            <person name="Yamashita R."/>
            <person name="Nakai K."/>
            <person name="Yada T."/>
            <person name="Nakamura Y."/>
            <person name="Ohara O."/>
            <person name="Isogai T."/>
            <person name="Sugano S."/>
        </authorList>
    </citation>
    <scope>NUCLEOTIDE SEQUENCE [LARGE SCALE MRNA] (ISOFORMS 1 AND 3)</scope>
    <scope>VARIANT ILE-158</scope>
    <source>
        <tissue>Brain</tissue>
        <tissue>Ileal mucosa</tissue>
        <tissue>Testis</tissue>
    </source>
</reference>
<reference key="3">
    <citation type="journal article" date="2004" name="Nature">
        <title>The sequence and analysis of duplication-rich human chromosome 16.</title>
        <authorList>
            <person name="Martin J."/>
            <person name="Han C."/>
            <person name="Gordon L.A."/>
            <person name="Terry A."/>
            <person name="Prabhakar S."/>
            <person name="She X."/>
            <person name="Xie G."/>
            <person name="Hellsten U."/>
            <person name="Chan Y.M."/>
            <person name="Altherr M."/>
            <person name="Couronne O."/>
            <person name="Aerts A."/>
            <person name="Bajorek E."/>
            <person name="Black S."/>
            <person name="Blumer H."/>
            <person name="Branscomb E."/>
            <person name="Brown N.C."/>
            <person name="Bruno W.J."/>
            <person name="Buckingham J.M."/>
            <person name="Callen D.F."/>
            <person name="Campbell C.S."/>
            <person name="Campbell M.L."/>
            <person name="Campbell E.W."/>
            <person name="Caoile C."/>
            <person name="Challacombe J.F."/>
            <person name="Chasteen L.A."/>
            <person name="Chertkov O."/>
            <person name="Chi H.C."/>
            <person name="Christensen M."/>
            <person name="Clark L.M."/>
            <person name="Cohn J.D."/>
            <person name="Denys M."/>
            <person name="Detter J.C."/>
            <person name="Dickson M."/>
            <person name="Dimitrijevic-Bussod M."/>
            <person name="Escobar J."/>
            <person name="Fawcett J.J."/>
            <person name="Flowers D."/>
            <person name="Fotopulos D."/>
            <person name="Glavina T."/>
            <person name="Gomez M."/>
            <person name="Gonzales E."/>
            <person name="Goodstein D."/>
            <person name="Goodwin L.A."/>
            <person name="Grady D.L."/>
            <person name="Grigoriev I."/>
            <person name="Groza M."/>
            <person name="Hammon N."/>
            <person name="Hawkins T."/>
            <person name="Haydu L."/>
            <person name="Hildebrand C.E."/>
            <person name="Huang W."/>
            <person name="Israni S."/>
            <person name="Jett J."/>
            <person name="Jewett P.B."/>
            <person name="Kadner K."/>
            <person name="Kimball H."/>
            <person name="Kobayashi A."/>
            <person name="Krawczyk M.-C."/>
            <person name="Leyba T."/>
            <person name="Longmire J.L."/>
            <person name="Lopez F."/>
            <person name="Lou Y."/>
            <person name="Lowry S."/>
            <person name="Ludeman T."/>
            <person name="Manohar C.F."/>
            <person name="Mark G.A."/>
            <person name="McMurray K.L."/>
            <person name="Meincke L.J."/>
            <person name="Morgan J."/>
            <person name="Moyzis R.K."/>
            <person name="Mundt M.O."/>
            <person name="Munk A.C."/>
            <person name="Nandkeshwar R.D."/>
            <person name="Pitluck S."/>
            <person name="Pollard M."/>
            <person name="Predki P."/>
            <person name="Parson-Quintana B."/>
            <person name="Ramirez L."/>
            <person name="Rash S."/>
            <person name="Retterer J."/>
            <person name="Ricke D.O."/>
            <person name="Robinson D.L."/>
            <person name="Rodriguez A."/>
            <person name="Salamov A."/>
            <person name="Saunders E.H."/>
            <person name="Scott D."/>
            <person name="Shough T."/>
            <person name="Stallings R.L."/>
            <person name="Stalvey M."/>
            <person name="Sutherland R.D."/>
            <person name="Tapia R."/>
            <person name="Tesmer J.G."/>
            <person name="Thayer N."/>
            <person name="Thompson L.S."/>
            <person name="Tice H."/>
            <person name="Torney D.C."/>
            <person name="Tran-Gyamfi M."/>
            <person name="Tsai M."/>
            <person name="Ulanovsky L.E."/>
            <person name="Ustaszewska A."/>
            <person name="Vo N."/>
            <person name="White P.S."/>
            <person name="Williams A.L."/>
            <person name="Wills P.L."/>
            <person name="Wu J.-R."/>
            <person name="Wu K."/>
            <person name="Yang J."/>
            <person name="DeJong P."/>
            <person name="Bruce D."/>
            <person name="Doggett N.A."/>
            <person name="Deaven L."/>
            <person name="Schmutz J."/>
            <person name="Grimwood J."/>
            <person name="Richardson P."/>
            <person name="Rokhsar D.S."/>
            <person name="Eichler E.E."/>
            <person name="Gilna P."/>
            <person name="Lucas S.M."/>
            <person name="Myers R.M."/>
            <person name="Rubin E.M."/>
            <person name="Pennacchio L.A."/>
        </authorList>
    </citation>
    <scope>NUCLEOTIDE SEQUENCE [LARGE SCALE GENOMIC DNA]</scope>
</reference>
<reference key="4">
    <citation type="journal article" date="2004" name="Genome Res.">
        <title>The status, quality, and expansion of the NIH full-length cDNA project: the Mammalian Gene Collection (MGC).</title>
        <authorList>
            <consortium name="The MGC Project Team"/>
        </authorList>
    </citation>
    <scope>NUCLEOTIDE SEQUENCE [LARGE SCALE MRNA] (ISOFORM 1)</scope>
    <scope>VARIANT ILE-158</scope>
    <source>
        <tissue>Muscle</tissue>
        <tissue>Placenta</tissue>
        <tissue>Skin</tissue>
        <tissue>Testis</tissue>
    </source>
</reference>
<reference key="5">
    <citation type="journal article" date="2007" name="BMC Genomics">
        <title>The full-ORF clone resource of the German cDNA consortium.</title>
        <authorList>
            <person name="Bechtel S."/>
            <person name="Rosenfelder H."/>
            <person name="Duda A."/>
            <person name="Schmidt C.P."/>
            <person name="Ernst U."/>
            <person name="Wellenreuther R."/>
            <person name="Mehrle A."/>
            <person name="Schuster C."/>
            <person name="Bahr A."/>
            <person name="Bloecker H."/>
            <person name="Heubner D."/>
            <person name="Hoerlein A."/>
            <person name="Michel G."/>
            <person name="Wedler H."/>
            <person name="Koehrer K."/>
            <person name="Ottenwaelder B."/>
            <person name="Poustka A."/>
            <person name="Wiemann S."/>
            <person name="Schupp I."/>
        </authorList>
    </citation>
    <scope>NUCLEOTIDE SEQUENCE [LARGE SCALE MRNA] OF 229-785 (ISOFORM 1)</scope>
    <source>
        <tissue>Uterus</tissue>
    </source>
</reference>
<reference key="6">
    <citation type="journal article" date="2001" name="Dev. Cell">
        <title>The Sec34/35 Golgi transport complex is related to the exocyst, defining a family of complexes involved in multiple steps of membrane traffic.</title>
        <authorList>
            <person name="Whyte J.R."/>
            <person name="Munro S."/>
        </authorList>
    </citation>
    <scope>SUBCELLULAR LOCATION</scope>
</reference>
<reference key="7">
    <citation type="journal article" date="2004" name="Genome Biol.">
        <title>An unappreciated role for RNA surveillance.</title>
        <authorList>
            <person name="Hillman R.T."/>
            <person name="Green R.E."/>
            <person name="Brenner S.E."/>
        </authorList>
    </citation>
    <scope>SPLICE ISOFORM(S) THAT ARE POTENTIAL NMD TARGET(S)</scope>
</reference>
<reference key="8">
    <citation type="journal article" date="2009" name="Anal. Chem.">
        <title>Lys-N and trypsin cover complementary parts of the phosphoproteome in a refined SCX-based approach.</title>
        <authorList>
            <person name="Gauci S."/>
            <person name="Helbig A.O."/>
            <person name="Slijper M."/>
            <person name="Krijgsveld J."/>
            <person name="Heck A.J."/>
            <person name="Mohammed S."/>
        </authorList>
    </citation>
    <scope>ACETYLATION [LARGE SCALE ANALYSIS] AT ALA-2</scope>
    <scope>CLEAVAGE OF INITIATOR METHIONINE [LARGE SCALE ANALYSIS]</scope>
    <scope>IDENTIFICATION BY MASS SPECTROMETRY [LARGE SCALE ANALYSIS]</scope>
</reference>
<reference key="9">
    <citation type="journal article" date="2009" name="EMBO J.">
        <title>Direct interaction between the COG complex and the SM protein, Sly1, is required for Golgi SNARE pairing.</title>
        <authorList>
            <person name="Laufman O."/>
            <person name="Kedan A."/>
            <person name="Hong W."/>
            <person name="Lev S."/>
        </authorList>
    </citation>
    <scope>FUNCTION</scope>
    <scope>INTERACTION WITH SCFD1 AND STX5</scope>
</reference>
<reference key="10">
    <citation type="journal article" date="2011" name="BMC Syst. Biol.">
        <title>Initial characterization of the human central proteome.</title>
        <authorList>
            <person name="Burkard T.R."/>
            <person name="Planyavsky M."/>
            <person name="Kaupe I."/>
            <person name="Breitwieser F.P."/>
            <person name="Buerckstuemmer T."/>
            <person name="Bennett K.L."/>
            <person name="Superti-Furga G."/>
            <person name="Colinge J."/>
        </authorList>
    </citation>
    <scope>IDENTIFICATION BY MASS SPECTROMETRY [LARGE SCALE ANALYSIS]</scope>
</reference>
<reference key="11">
    <citation type="journal article" date="2012" name="Proc. Natl. Acad. Sci. U.S.A.">
        <title>N-terminal acetylome analyses and functional insights of the N-terminal acetyltransferase NatB.</title>
        <authorList>
            <person name="Van Damme P."/>
            <person name="Lasa M."/>
            <person name="Polevoda B."/>
            <person name="Gazquez C."/>
            <person name="Elosegui-Artola A."/>
            <person name="Kim D.S."/>
            <person name="De Juan-Pardo E."/>
            <person name="Demeyer K."/>
            <person name="Hole K."/>
            <person name="Larrea E."/>
            <person name="Timmerman E."/>
            <person name="Prieto J."/>
            <person name="Arnesen T."/>
            <person name="Sherman F."/>
            <person name="Gevaert K."/>
            <person name="Aldabe R."/>
        </authorList>
    </citation>
    <scope>ACETYLATION [LARGE SCALE ANALYSIS] AT ALA-2</scope>
    <scope>CLEAVAGE OF INITIATOR METHIONINE [LARGE SCALE ANALYSIS]</scope>
    <scope>IDENTIFICATION BY MASS SPECTROMETRY [LARGE SCALE ANALYSIS]</scope>
</reference>
<reference key="12">
    <citation type="journal article" date="2013" name="J. Proteome Res.">
        <title>Toward a comprehensive characterization of a human cancer cell phosphoproteome.</title>
        <authorList>
            <person name="Zhou H."/>
            <person name="Di Palma S."/>
            <person name="Preisinger C."/>
            <person name="Peng M."/>
            <person name="Polat A.N."/>
            <person name="Heck A.J."/>
            <person name="Mohammed S."/>
        </authorList>
    </citation>
    <scope>PHOSPHORYLATION [LARGE SCALE ANALYSIS] AT SER-6</scope>
    <scope>IDENTIFICATION BY MASS SPECTROMETRY [LARGE SCALE ANALYSIS]</scope>
    <source>
        <tissue>Cervix carcinoma</tissue>
        <tissue>Erythroleukemia</tissue>
    </source>
</reference>
<reference key="13">
    <citation type="journal article" date="2018" name="Am. J. Hum. Genet.">
        <title>A recurrent de novo heterozygous COG4 substitution leads to Saul-Wilson syndrome, disrupted vesicular trafficking, and altered proteoglycan glycosylation.</title>
        <authorList>
            <person name="Ferreira C.R."/>
            <person name="Xia Z.J."/>
            <person name="Clement A."/>
            <person name="Parry D.A."/>
            <person name="Davids M."/>
            <person name="Taylan F."/>
            <person name="Sharma P."/>
            <person name="Turgeon C.T."/>
            <person name="Blanco-Sanchez B."/>
            <person name="Ng B.G."/>
            <person name="Logan C.V."/>
            <person name="Wolfe L.A."/>
            <person name="Solomon B.D."/>
            <person name="Cho M.T."/>
            <person name="Douglas G."/>
            <person name="Carvalho D.R."/>
            <person name="Bratke H."/>
            <person name="Haug M.G."/>
            <person name="Phillips J.B."/>
            <person name="Wegner J."/>
            <person name="Tiemeyer M."/>
            <person name="Aoki K."/>
            <person name="Nordgren A."/>
            <person name="Hammarsjoe A."/>
            <person name="Duker A.L."/>
            <person name="Rohena L."/>
            <person name="Hove H.B."/>
            <person name="Ek J."/>
            <person name="Adams D."/>
            <person name="Tifft C.J."/>
            <person name="Onyekweli T."/>
            <person name="Weixel T."/>
            <person name="Macnamara E."/>
            <person name="Radtke K."/>
            <person name="Powis Z."/>
            <person name="Earl D."/>
            <person name="Gabriel M."/>
            <person name="Russi A.H.S."/>
            <person name="Brick L."/>
            <person name="Kozenko M."/>
            <person name="Tham E."/>
            <person name="Raymond K.M."/>
            <person name="Phillips J.A. III"/>
            <person name="Tiller G.E."/>
            <person name="Wilson W.G."/>
            <person name="Hamid R."/>
            <person name="Malicdan M.C.V."/>
            <person name="Nishimura G."/>
            <person name="Grigelioniene G."/>
            <person name="Jackson A."/>
            <person name="Westerfield M."/>
            <person name="Bober M.B."/>
            <person name="Gahl W.A."/>
            <person name="Freeze H.H."/>
        </authorList>
    </citation>
    <scope>INVOLVEMENT IN SWILS</scope>
    <scope>VARIANT SWILS ARG-512</scope>
    <scope>CHARACTERIZATION OF VARIANT SWILS ARG-512</scope>
    <scope>FUNCTION</scope>
    <scope>SUBCELLULAR LOCATION</scope>
</reference>
<reference key="14">
    <citation type="journal article" date="2009" name="Proc. Natl. Acad. Sci. U.S.A.">
        <title>Structural basis for a human glycosylation disorder caused by mutation of the COG4 gene.</title>
        <authorList>
            <person name="Richardson B.C."/>
            <person name="Smith R.D."/>
            <person name="Ungar D."/>
            <person name="Nakamura A."/>
            <person name="Jeffrey P.D."/>
            <person name="Lupashin V.V."/>
            <person name="Hughson F.M."/>
        </authorList>
    </citation>
    <scope>X-RAY CRYSTALLOGRAPHY (1.9 ANGSTROMS) OF 525-785</scope>
    <scope>SUBUNIT</scope>
    <scope>IDENTIFICATION OF DOMAINS D AND E</scope>
    <scope>CHARACTERIZATION OF VARIANT CDG2J TRP-729</scope>
    <scope>MUTAGENESIS OF ARG-729 AND GLU-764</scope>
</reference>
<reference key="15">
    <citation type="journal article" date="2009" name="Hum. Mol. Genet.">
        <title>Golgi function and dysfunction in the first COG4-deficient CDG type II patient.</title>
        <authorList>
            <person name="Reynders E."/>
            <person name="Foulquier F."/>
            <person name="Leao Teles E."/>
            <person name="Quelhas D."/>
            <person name="Morelle W."/>
            <person name="Rabouille C."/>
            <person name="Annaert W."/>
            <person name="Matthijs G."/>
        </authorList>
    </citation>
    <scope>VARIANT CDG2J TRP-729</scope>
</reference>
<name>COG4_HUMAN</name>
<evidence type="ECO:0000256" key="1">
    <source>
        <dbReference type="SAM" id="MobiDB-lite"/>
    </source>
</evidence>
<evidence type="ECO:0000269" key="2">
    <source>
    </source>
</evidence>
<evidence type="ECO:0000269" key="3">
    <source>
    </source>
</evidence>
<evidence type="ECO:0000269" key="4">
    <source>
    </source>
</evidence>
<evidence type="ECO:0000269" key="5">
    <source>
    </source>
</evidence>
<evidence type="ECO:0000269" key="6">
    <source>
    </source>
</evidence>
<evidence type="ECO:0000269" key="7">
    <source>
    </source>
</evidence>
<evidence type="ECO:0000269" key="8">
    <source ref="1"/>
</evidence>
<evidence type="ECO:0000303" key="9">
    <source>
    </source>
</evidence>
<evidence type="ECO:0000303" key="10">
    <source ref="1"/>
</evidence>
<evidence type="ECO:0000305" key="11"/>
<evidence type="ECO:0000305" key="12">
    <source>
    </source>
</evidence>
<evidence type="ECO:0007744" key="13">
    <source>
    </source>
</evidence>
<evidence type="ECO:0007744" key="14">
    <source>
    </source>
</evidence>
<evidence type="ECO:0007744" key="15">
    <source>
    </source>
</evidence>
<evidence type="ECO:0007829" key="16">
    <source>
        <dbReference type="PDB" id="3HR0"/>
    </source>
</evidence>
<feature type="initiator methionine" description="Removed" evidence="13 14">
    <location>
        <position position="1"/>
    </location>
</feature>
<feature type="chain" id="PRO_0000213504" description="Conserved oligomeric Golgi complex subunit 4">
    <location>
        <begin position="2"/>
        <end position="785"/>
    </location>
</feature>
<feature type="region of interest" description="Disordered" evidence="1">
    <location>
        <begin position="1"/>
        <end position="24"/>
    </location>
</feature>
<feature type="region of interest" description="Interaction with SCFD1" evidence="5">
    <location>
        <begin position="2"/>
        <end position="84"/>
    </location>
</feature>
<feature type="region of interest" description="Interaction with STX5" evidence="5">
    <location>
        <begin position="85"/>
        <end position="153"/>
    </location>
</feature>
<feature type="region of interest" description="D domain" evidence="6">
    <location>
        <begin position="618"/>
        <end position="740"/>
    </location>
</feature>
<feature type="region of interest" description="E domain; essential for proper cell surface glycosylation" evidence="6">
    <location>
        <begin position="741"/>
        <end position="785"/>
    </location>
</feature>
<feature type="modified residue" description="N-acetylalanine" evidence="13 14">
    <location>
        <position position="2"/>
    </location>
</feature>
<feature type="modified residue" description="Phosphoserine" evidence="15">
    <location>
        <position position="6"/>
    </location>
</feature>
<feature type="splice variant" id="VSP_037551" description="In isoform 3." evidence="9">
    <location>
        <begin position="1"/>
        <end position="73"/>
    </location>
</feature>
<feature type="splice variant" id="VSP_001127" description="In isoform 2." evidence="10">
    <original>FRHVQNN</original>
    <variation>NFVFSFF</variation>
    <location>
        <begin position="331"/>
        <end position="337"/>
    </location>
</feature>
<feature type="splice variant" id="VSP_001128" description="In isoform 2." evidence="10">
    <location>
        <begin position="338"/>
        <end position="785"/>
    </location>
</feature>
<feature type="sequence variant" id="VAR_058009" description="In dbSNP:rs3931036." evidence="2 3 8">
    <original>T</original>
    <variation>I</variation>
    <location>
        <position position="158"/>
    </location>
</feature>
<feature type="sequence variant" id="VAR_081564" description="In SWILS; delayed anterograde vesicular trafficking from the ER to the Golgi and accelerated retrograde vesicular recycling from the Golgi to the ER, leading to a decrease in Golgi volume, as well as morphologic abnormalities with collapse of the Golgi stacks in affected fibroblasts; altered decorin/DCN Golgi-dependent glycosylation; no effect on protein expression; dbSNP:rs1555575860." evidence="7">
    <original>G</original>
    <variation>R</variation>
    <location>
        <position position="512"/>
    </location>
</feature>
<feature type="sequence variant" id="VAR_063767" description="In CDG2J; severe defects in glycosylation." evidence="4 6">
    <original>R</original>
    <variation>W</variation>
    <location>
        <position position="729"/>
    </location>
</feature>
<feature type="mutagenesis site" description="Severe defects in glycosylation." evidence="6">
    <original>R</original>
    <variation>A</variation>
    <location>
        <position position="729"/>
    </location>
</feature>
<feature type="mutagenesis site" description="Severe defects in glycosylation." evidence="6">
    <original>E</original>
    <variation>A</variation>
    <location>
        <position position="764"/>
    </location>
</feature>
<feature type="sequence conflict" description="In Ref. 2; BAB14286." evidence="11" ref="2">
    <original>E</original>
    <variation>G</variation>
    <location>
        <position position="177"/>
    </location>
</feature>
<feature type="sequence conflict" description="In Ref. 2; BAB14286." evidence="11" ref="2">
    <original>K</original>
    <variation>R</variation>
    <location>
        <position position="234"/>
    </location>
</feature>
<feature type="sequence conflict" description="In Ref. 2; BAB14286." evidence="11" ref="2">
    <original>T</original>
    <variation>A</variation>
    <location>
        <position position="285"/>
    </location>
</feature>
<feature type="sequence conflict" description="In Ref. 2; BAB15483." evidence="11" ref="2">
    <original>E</original>
    <variation>G</variation>
    <location>
        <position position="486"/>
    </location>
</feature>
<feature type="sequence conflict" description="In Ref. 2; BAB14286/BAG59950." evidence="11" ref="2">
    <original>S</original>
    <variation>G</variation>
    <location>
        <position position="588"/>
    </location>
</feature>
<feature type="sequence conflict" description="In Ref. 4; AAH06306." evidence="11" ref="4">
    <original>A</original>
    <variation>S</variation>
    <location>
        <position position="644"/>
    </location>
</feature>
<feature type="helix" evidence="16">
    <location>
        <begin position="537"/>
        <end position="572"/>
    </location>
</feature>
<feature type="turn" evidence="16">
    <location>
        <begin position="573"/>
        <end position="575"/>
    </location>
</feature>
<feature type="helix" evidence="16">
    <location>
        <begin position="580"/>
        <end position="615"/>
    </location>
</feature>
<feature type="helix" evidence="16">
    <location>
        <begin position="617"/>
        <end position="625"/>
    </location>
</feature>
<feature type="helix" evidence="16">
    <location>
        <begin position="626"/>
        <end position="629"/>
    </location>
</feature>
<feature type="helix" evidence="16">
    <location>
        <begin position="636"/>
        <end position="644"/>
    </location>
</feature>
<feature type="helix" evidence="16">
    <location>
        <begin position="649"/>
        <end position="666"/>
    </location>
</feature>
<feature type="helix" evidence="16">
    <location>
        <begin position="669"/>
        <end position="691"/>
    </location>
</feature>
<feature type="helix" evidence="16">
    <location>
        <begin position="698"/>
        <end position="716"/>
    </location>
</feature>
<feature type="helix" evidence="16">
    <location>
        <begin position="723"/>
        <end position="726"/>
    </location>
</feature>
<feature type="helix" evidence="16">
    <location>
        <begin position="728"/>
        <end position="737"/>
    </location>
</feature>
<feature type="helix" evidence="16">
    <location>
        <begin position="742"/>
        <end position="747"/>
    </location>
</feature>
<feature type="helix" evidence="16">
    <location>
        <begin position="750"/>
        <end position="753"/>
    </location>
</feature>
<feature type="helix" evidence="16">
    <location>
        <begin position="762"/>
        <end position="769"/>
    </location>
</feature>
<feature type="helix" evidence="16">
    <location>
        <begin position="777"/>
        <end position="782"/>
    </location>
</feature>
<sequence length="785" mass="89083">MADLDSPPKLSGVQQPSEGVGGGRCSEISAELIRSLTELQELEAVYERLCGEEKVVERELDALLEQQNTIESKMVTLHRMGPNLQLIEGDAKQLAGMITFTCNLAENVSSKVRQLDLAKNRLYQAIQRADDILDLKFCMDGVQTALRSEDYEQAAAHTHRYLCLDKSVIELSRQGKEGSMIDANLKLLQEAEQRLKAIVAEKFAIATKEGDLPQVERFFKIFPLLGLHEEGLRKFSEYLCKQVASKAEENLLMVLGTDMSDRRAAVIFADTLTLLFEGIARIVETHQPIVETYYGPGRLYTLIKYLQVECDRQVEKVVDKFIKQRDYHQQFRHVQNNLMRNSTTEKIEPRELDPILTEVTLMNARSELYLRFLKKRISSDFEVGDSMASEEVKQEHQKCLDKLLNNCLLSCTMQELIGLYVTMEEYFMRETVNKAVALDTYEKGQLTSSMVDDVFYIVKKCIGRALSSSSIDCLCAMINLATTELESDFRDVLCNKLRMGFPATTFQDIQRGVTSAVNIMHSSLQQGKFDTKGIESTDEAKMSFLVTLNNVEVCSENISTLKKTLESDCTKLFSQGIGGEQAQAKFDSCLSDLAAVSNKFRDLLQEGLTELNSTAIKPQVQPWINSFFSVSHNIEEEEFNDYEANDPWVQQFILNLEQQMAEFKASLSPVIYDSLTGLMTSLVAVELEKVVLKSTFNRLGGLQFDKELRSLIAYLTTVTTWTIRDKFARLSQMATILNLERVTEILDYWGPNSGPLTWRLTPAEVRQVLALRIDFRSEDIKRLRL</sequence>
<accession>Q9H9E3</accession>
<accession>B4DMN8</accession>
<accession>C9JS23</accession>
<accession>Q96D40</accession>
<accession>Q9BRF0</accession>
<accession>Q9BVZ2</accession>
<accession>Q9H5Y4</accession>
<accession>Q9Y3W3</accession>
<gene>
    <name type="primary">COG4</name>
</gene>
<protein>
    <recommendedName>
        <fullName>Conserved oligomeric Golgi complex subunit 4</fullName>
        <shortName>COG complex subunit 4</shortName>
    </recommendedName>
    <alternativeName>
        <fullName>Component of oligomeric Golgi complex 4</fullName>
    </alternativeName>
</protein>
<proteinExistence type="evidence at protein level"/>